<gene>
    <name type="primary">mhpF</name>
    <name type="ordered locus">CHY_1279</name>
</gene>
<organism>
    <name type="scientific">Carboxydothermus hydrogenoformans (strain ATCC BAA-161 / DSM 6008 / Z-2901)</name>
    <dbReference type="NCBI Taxonomy" id="246194"/>
    <lineage>
        <taxon>Bacteria</taxon>
        <taxon>Bacillati</taxon>
        <taxon>Bacillota</taxon>
        <taxon>Clostridia</taxon>
        <taxon>Thermoanaerobacterales</taxon>
        <taxon>Thermoanaerobacteraceae</taxon>
        <taxon>Carboxydothermus</taxon>
    </lineage>
</organism>
<comment type="catalytic activity">
    <reaction evidence="1">
        <text>acetaldehyde + NAD(+) + CoA = acetyl-CoA + NADH + H(+)</text>
        <dbReference type="Rhea" id="RHEA:23288"/>
        <dbReference type="ChEBI" id="CHEBI:15343"/>
        <dbReference type="ChEBI" id="CHEBI:15378"/>
        <dbReference type="ChEBI" id="CHEBI:57287"/>
        <dbReference type="ChEBI" id="CHEBI:57288"/>
        <dbReference type="ChEBI" id="CHEBI:57540"/>
        <dbReference type="ChEBI" id="CHEBI:57945"/>
        <dbReference type="EC" id="1.2.1.10"/>
    </reaction>
</comment>
<comment type="similarity">
    <text evidence="1">Belongs to the acetaldehyde dehydrogenase family.</text>
</comment>
<accession>Q3ACM1</accession>
<evidence type="ECO:0000255" key="1">
    <source>
        <dbReference type="HAMAP-Rule" id="MF_01657"/>
    </source>
</evidence>
<protein>
    <recommendedName>
        <fullName evidence="1">Acetaldehyde dehydrogenase</fullName>
        <ecNumber evidence="1">1.2.1.10</ecNumber>
    </recommendedName>
    <alternativeName>
        <fullName evidence="1">Acetaldehyde dehydrogenase [acetylating]</fullName>
    </alternativeName>
</protein>
<feature type="chain" id="PRO_0000387646" description="Acetaldehyde dehydrogenase">
    <location>
        <begin position="1"/>
        <end position="299"/>
    </location>
</feature>
<feature type="active site" description="Acyl-thioester intermediate" evidence="1">
    <location>
        <position position="126"/>
    </location>
</feature>
<feature type="binding site" evidence="1">
    <location>
        <begin position="157"/>
        <end position="165"/>
    </location>
    <ligand>
        <name>NAD(+)</name>
        <dbReference type="ChEBI" id="CHEBI:57540"/>
    </ligand>
</feature>
<feature type="binding site" evidence="1">
    <location>
        <position position="267"/>
    </location>
    <ligand>
        <name>NAD(+)</name>
        <dbReference type="ChEBI" id="CHEBI:57540"/>
    </ligand>
</feature>
<sequence length="299" mass="31888">MSNKIKAAIIGPGNIGMDLMFKLMRSKYIDVDTVVGIIPESEGLALARKHGKKTSAEGIKAILGNKDIKIVFDATSAKAHLKHAPLLEQDGKIAIDLTPAAVGPYCVPAVTMEEQLNCKNVNMVTCAGQATTPIVYAINKIADVKYAEIVATISSRSAGPGTRQNIDEFTETTAKALEKIGGADKGKAIIILNPAEPPIMMRNTIYTRVANPDAPGIIEAIEEMVGKIKKYVPGYRLKVPPIIDGDKITTIIEVEGEGAYLPKYAGNLDIITAAAVAFADEVAKKLLAEEQAKEVRAHG</sequence>
<name>ACDH_CARHZ</name>
<dbReference type="EC" id="1.2.1.10" evidence="1"/>
<dbReference type="EMBL" id="CP000141">
    <property type="protein sequence ID" value="ABB13885.1"/>
    <property type="molecule type" value="Genomic_DNA"/>
</dbReference>
<dbReference type="RefSeq" id="WP_011344189.1">
    <property type="nucleotide sequence ID" value="NC_007503.1"/>
</dbReference>
<dbReference type="SMR" id="Q3ACM1"/>
<dbReference type="STRING" id="246194.CHY_1279"/>
<dbReference type="KEGG" id="chy:CHY_1279"/>
<dbReference type="eggNOG" id="COG4569">
    <property type="taxonomic scope" value="Bacteria"/>
</dbReference>
<dbReference type="HOGENOM" id="CLU_062208_0_0_9"/>
<dbReference type="InParanoid" id="Q3ACM1"/>
<dbReference type="OrthoDB" id="9783105at2"/>
<dbReference type="Proteomes" id="UP000002706">
    <property type="component" value="Chromosome"/>
</dbReference>
<dbReference type="GO" id="GO:0008774">
    <property type="term" value="F:acetaldehyde dehydrogenase (acetylating) activity"/>
    <property type="evidence" value="ECO:0007669"/>
    <property type="project" value="UniProtKB-UniRule"/>
</dbReference>
<dbReference type="GO" id="GO:0051287">
    <property type="term" value="F:NAD binding"/>
    <property type="evidence" value="ECO:0007669"/>
    <property type="project" value="UniProtKB-UniRule"/>
</dbReference>
<dbReference type="GO" id="GO:0009056">
    <property type="term" value="P:catabolic process"/>
    <property type="evidence" value="ECO:0007669"/>
    <property type="project" value="UniProtKB-KW"/>
</dbReference>
<dbReference type="CDD" id="cd23933">
    <property type="entry name" value="ALDH_C"/>
    <property type="match status" value="1"/>
</dbReference>
<dbReference type="Gene3D" id="3.30.360.10">
    <property type="entry name" value="Dihydrodipicolinate Reductase, domain 2"/>
    <property type="match status" value="1"/>
</dbReference>
<dbReference type="Gene3D" id="3.40.50.720">
    <property type="entry name" value="NAD(P)-binding Rossmann-like Domain"/>
    <property type="match status" value="1"/>
</dbReference>
<dbReference type="HAMAP" id="MF_01657">
    <property type="entry name" value="Ac_ald_DH_ac"/>
    <property type="match status" value="1"/>
</dbReference>
<dbReference type="InterPro" id="IPR003361">
    <property type="entry name" value="Acetaldehyde_dehydrogenase"/>
</dbReference>
<dbReference type="InterPro" id="IPR015426">
    <property type="entry name" value="Acetylaldehyde_DH_C"/>
</dbReference>
<dbReference type="InterPro" id="IPR036291">
    <property type="entry name" value="NAD(P)-bd_dom_sf"/>
</dbReference>
<dbReference type="InterPro" id="IPR000534">
    <property type="entry name" value="Semialdehyde_DH_NAD-bd"/>
</dbReference>
<dbReference type="NCBIfam" id="TIGR03215">
    <property type="entry name" value="ac_ald_DH_ac"/>
    <property type="match status" value="1"/>
</dbReference>
<dbReference type="NCBIfam" id="NF006157">
    <property type="entry name" value="PRK08300.1"/>
    <property type="match status" value="1"/>
</dbReference>
<dbReference type="Pfam" id="PF09290">
    <property type="entry name" value="AcetDehyd-dimer"/>
    <property type="match status" value="1"/>
</dbReference>
<dbReference type="Pfam" id="PF01118">
    <property type="entry name" value="Semialdhyde_dh"/>
    <property type="match status" value="1"/>
</dbReference>
<dbReference type="PIRSF" id="PIRSF015689">
    <property type="entry name" value="Actaldh_dh_actl"/>
    <property type="match status" value="1"/>
</dbReference>
<dbReference type="SMART" id="SM00859">
    <property type="entry name" value="Semialdhyde_dh"/>
    <property type="match status" value="1"/>
</dbReference>
<dbReference type="SUPFAM" id="SSF55347">
    <property type="entry name" value="Glyceraldehyde-3-phosphate dehydrogenase-like, C-terminal domain"/>
    <property type="match status" value="1"/>
</dbReference>
<dbReference type="SUPFAM" id="SSF51735">
    <property type="entry name" value="NAD(P)-binding Rossmann-fold domains"/>
    <property type="match status" value="1"/>
</dbReference>
<reference key="1">
    <citation type="journal article" date="2005" name="PLoS Genet.">
        <title>Life in hot carbon monoxide: the complete genome sequence of Carboxydothermus hydrogenoformans Z-2901.</title>
        <authorList>
            <person name="Wu M."/>
            <person name="Ren Q."/>
            <person name="Durkin A.S."/>
            <person name="Daugherty S.C."/>
            <person name="Brinkac L.M."/>
            <person name="Dodson R.J."/>
            <person name="Madupu R."/>
            <person name="Sullivan S.A."/>
            <person name="Kolonay J.F."/>
            <person name="Nelson W.C."/>
            <person name="Tallon L.J."/>
            <person name="Jones K.M."/>
            <person name="Ulrich L.E."/>
            <person name="Gonzalez J.M."/>
            <person name="Zhulin I.B."/>
            <person name="Robb F.T."/>
            <person name="Eisen J.A."/>
        </authorList>
    </citation>
    <scope>NUCLEOTIDE SEQUENCE [LARGE SCALE GENOMIC DNA]</scope>
    <source>
        <strain>ATCC BAA-161 / DSM 6008 / Z-2901</strain>
    </source>
</reference>
<proteinExistence type="inferred from homology"/>
<keyword id="KW-0058">Aromatic hydrocarbons catabolism</keyword>
<keyword id="KW-0520">NAD</keyword>
<keyword id="KW-0560">Oxidoreductase</keyword>
<keyword id="KW-1185">Reference proteome</keyword>